<name>XYLA_GEOTN</name>
<gene>
    <name evidence="1" type="primary">xylA</name>
    <name type="ordered locus">GTNG_1757</name>
</gene>
<feature type="chain" id="PRO_1000026441" description="Xylose isomerase">
    <location>
        <begin position="1"/>
        <end position="445"/>
    </location>
</feature>
<feature type="active site" evidence="1">
    <location>
        <position position="99"/>
    </location>
</feature>
<feature type="active site" evidence="1">
    <location>
        <position position="102"/>
    </location>
</feature>
<feature type="binding site" evidence="1">
    <location>
        <position position="230"/>
    </location>
    <ligand>
        <name>Mg(2+)</name>
        <dbReference type="ChEBI" id="CHEBI:18420"/>
        <label>1</label>
    </ligand>
</feature>
<feature type="binding site" evidence="1">
    <location>
        <position position="266"/>
    </location>
    <ligand>
        <name>Mg(2+)</name>
        <dbReference type="ChEBI" id="CHEBI:18420"/>
        <label>1</label>
    </ligand>
</feature>
<feature type="binding site" evidence="1">
    <location>
        <position position="266"/>
    </location>
    <ligand>
        <name>Mg(2+)</name>
        <dbReference type="ChEBI" id="CHEBI:18420"/>
        <label>2</label>
    </ligand>
</feature>
<feature type="binding site" evidence="1">
    <location>
        <position position="269"/>
    </location>
    <ligand>
        <name>Mg(2+)</name>
        <dbReference type="ChEBI" id="CHEBI:18420"/>
        <label>2</label>
    </ligand>
</feature>
<feature type="binding site" evidence="1">
    <location>
        <position position="294"/>
    </location>
    <ligand>
        <name>Mg(2+)</name>
        <dbReference type="ChEBI" id="CHEBI:18420"/>
        <label>1</label>
    </ligand>
</feature>
<feature type="binding site" evidence="1">
    <location>
        <position position="305"/>
    </location>
    <ligand>
        <name>Mg(2+)</name>
        <dbReference type="ChEBI" id="CHEBI:18420"/>
        <label>2</label>
    </ligand>
</feature>
<feature type="binding site" evidence="1">
    <location>
        <position position="307"/>
    </location>
    <ligand>
        <name>Mg(2+)</name>
        <dbReference type="ChEBI" id="CHEBI:18420"/>
        <label>2</label>
    </ligand>
</feature>
<feature type="binding site" evidence="1">
    <location>
        <position position="337"/>
    </location>
    <ligand>
        <name>Mg(2+)</name>
        <dbReference type="ChEBI" id="CHEBI:18420"/>
        <label>1</label>
    </ligand>
</feature>
<evidence type="ECO:0000255" key="1">
    <source>
        <dbReference type="HAMAP-Rule" id="MF_00455"/>
    </source>
</evidence>
<organism>
    <name type="scientific">Geobacillus thermodenitrificans (strain NG80-2)</name>
    <dbReference type="NCBI Taxonomy" id="420246"/>
    <lineage>
        <taxon>Bacteria</taxon>
        <taxon>Bacillati</taxon>
        <taxon>Bacillota</taxon>
        <taxon>Bacilli</taxon>
        <taxon>Bacillales</taxon>
        <taxon>Anoxybacillaceae</taxon>
        <taxon>Geobacillus</taxon>
    </lineage>
</organism>
<proteinExistence type="inferred from homology"/>
<sequence length="445" mass="50650">MAYFPNIGKIAYEGPESRNPFAFKFYNPEEKVGGKTMEEHLRFSVAYWHTFTGDGSDPFGVGNMIRPWDKYSGMDLAKARVEAAFELFEKLNVPFFCFHDVDIAPEGETLSETYKNLDEIVDMIEEYMKTSKTKLLWNTANLFSHPRFVHGAATSCNADVFAYAAAKVKKGLEIAKRLGAENYVFWGGREGYETLLNTDMKLELDNLARFFHMAVDYAKEIGFDGQFLIEPKPKEPTKHQYDFDVATALAFLQTYGLKDYFKFNIEANHATLAGHTFEHELRVARIHGMLGSVDANQGDMLLGWDTDEFPTDLYATTLAMYEILQNGGLGRGGLNFDAKVRRGSFEPEDLFYAHIAGMDSFAIGLKVAHRLLEDRVFEQFIEERYKSYTEGIGREIVEGTADFHKLEQYALQLGEIRNTSGRLERLKTLLNQYLLEVSVPSKARL</sequence>
<keyword id="KW-0119">Carbohydrate metabolism</keyword>
<keyword id="KW-0963">Cytoplasm</keyword>
<keyword id="KW-0413">Isomerase</keyword>
<keyword id="KW-0460">Magnesium</keyword>
<keyword id="KW-0479">Metal-binding</keyword>
<keyword id="KW-0859">Xylose metabolism</keyword>
<accession>A4IP67</accession>
<reference key="1">
    <citation type="journal article" date="2007" name="Proc. Natl. Acad. Sci. U.S.A.">
        <title>Genome and proteome of long-chain alkane degrading Geobacillus thermodenitrificans NG80-2 isolated from a deep-subsurface oil reservoir.</title>
        <authorList>
            <person name="Feng L."/>
            <person name="Wang W."/>
            <person name="Cheng J."/>
            <person name="Ren Y."/>
            <person name="Zhao G."/>
            <person name="Gao C."/>
            <person name="Tang Y."/>
            <person name="Liu X."/>
            <person name="Han W."/>
            <person name="Peng X."/>
            <person name="Liu R."/>
            <person name="Wang L."/>
        </authorList>
    </citation>
    <scope>NUCLEOTIDE SEQUENCE [LARGE SCALE GENOMIC DNA]</scope>
    <source>
        <strain>NG80-2</strain>
    </source>
</reference>
<dbReference type="EC" id="5.3.1.5" evidence="1"/>
<dbReference type="EMBL" id="CP000557">
    <property type="protein sequence ID" value="ABO67121.1"/>
    <property type="molecule type" value="Genomic_DNA"/>
</dbReference>
<dbReference type="RefSeq" id="WP_008880082.1">
    <property type="nucleotide sequence ID" value="NC_009328.1"/>
</dbReference>
<dbReference type="SMR" id="A4IP67"/>
<dbReference type="GeneID" id="87624078"/>
<dbReference type="KEGG" id="gtn:GTNG_1757"/>
<dbReference type="eggNOG" id="COG2115">
    <property type="taxonomic scope" value="Bacteria"/>
</dbReference>
<dbReference type="HOGENOM" id="CLU_037261_1_0_9"/>
<dbReference type="Proteomes" id="UP000001578">
    <property type="component" value="Chromosome"/>
</dbReference>
<dbReference type="GO" id="GO:0005737">
    <property type="term" value="C:cytoplasm"/>
    <property type="evidence" value="ECO:0007669"/>
    <property type="project" value="UniProtKB-SubCell"/>
</dbReference>
<dbReference type="GO" id="GO:0000287">
    <property type="term" value="F:magnesium ion binding"/>
    <property type="evidence" value="ECO:0007669"/>
    <property type="project" value="UniProtKB-UniRule"/>
</dbReference>
<dbReference type="GO" id="GO:0009045">
    <property type="term" value="F:xylose isomerase activity"/>
    <property type="evidence" value="ECO:0007669"/>
    <property type="project" value="UniProtKB-UniRule"/>
</dbReference>
<dbReference type="GO" id="GO:0042732">
    <property type="term" value="P:D-xylose metabolic process"/>
    <property type="evidence" value="ECO:0007669"/>
    <property type="project" value="UniProtKB-UniRule"/>
</dbReference>
<dbReference type="FunFam" id="3.20.20.150:FF:000002">
    <property type="entry name" value="Xylose isomerase"/>
    <property type="match status" value="1"/>
</dbReference>
<dbReference type="Gene3D" id="3.20.20.150">
    <property type="entry name" value="Divalent-metal-dependent TIM barrel enzymes"/>
    <property type="match status" value="1"/>
</dbReference>
<dbReference type="HAMAP" id="MF_00455">
    <property type="entry name" value="Xylose_isom_A"/>
    <property type="match status" value="1"/>
</dbReference>
<dbReference type="InterPro" id="IPR036237">
    <property type="entry name" value="Xyl_isomerase-like_sf"/>
</dbReference>
<dbReference type="InterPro" id="IPR013452">
    <property type="entry name" value="Xylose_isom_bac"/>
</dbReference>
<dbReference type="InterPro" id="IPR001998">
    <property type="entry name" value="Xylose_isomerase"/>
</dbReference>
<dbReference type="NCBIfam" id="NF003998">
    <property type="entry name" value="PRK05474.1"/>
    <property type="match status" value="1"/>
</dbReference>
<dbReference type="NCBIfam" id="TIGR02630">
    <property type="entry name" value="xylose_isom_A"/>
    <property type="match status" value="1"/>
</dbReference>
<dbReference type="PANTHER" id="PTHR48408">
    <property type="match status" value="1"/>
</dbReference>
<dbReference type="PANTHER" id="PTHR48408:SF1">
    <property type="entry name" value="XYLOSE ISOMERASE"/>
    <property type="match status" value="1"/>
</dbReference>
<dbReference type="PRINTS" id="PR00688">
    <property type="entry name" value="XYLOSISMRASE"/>
</dbReference>
<dbReference type="SUPFAM" id="SSF51658">
    <property type="entry name" value="Xylose isomerase-like"/>
    <property type="match status" value="1"/>
</dbReference>
<dbReference type="PROSITE" id="PS51415">
    <property type="entry name" value="XYLOSE_ISOMERASE"/>
    <property type="match status" value="1"/>
</dbReference>
<comment type="catalytic activity">
    <reaction evidence="1">
        <text>alpha-D-xylose = alpha-D-xylulofuranose</text>
        <dbReference type="Rhea" id="RHEA:22816"/>
        <dbReference type="ChEBI" id="CHEBI:28518"/>
        <dbReference type="ChEBI" id="CHEBI:188998"/>
        <dbReference type="EC" id="5.3.1.5"/>
    </reaction>
</comment>
<comment type="cofactor">
    <cofactor evidence="1">
        <name>Mg(2+)</name>
        <dbReference type="ChEBI" id="CHEBI:18420"/>
    </cofactor>
    <text evidence="1">Binds 2 magnesium ions per subunit.</text>
</comment>
<comment type="subunit">
    <text evidence="1">Homotetramer.</text>
</comment>
<comment type="subcellular location">
    <subcellularLocation>
        <location evidence="1">Cytoplasm</location>
    </subcellularLocation>
</comment>
<comment type="similarity">
    <text evidence="1">Belongs to the xylose isomerase family.</text>
</comment>
<protein>
    <recommendedName>
        <fullName evidence="1">Xylose isomerase</fullName>
        <ecNumber evidence="1">5.3.1.5</ecNumber>
    </recommendedName>
</protein>